<protein>
    <recommendedName>
        <fullName evidence="1">Protein nucleotidyltransferase YdiU</fullName>
        <ecNumber evidence="1">2.7.7.-</ecNumber>
    </recommendedName>
    <alternativeName>
        <fullName evidence="1">Protein adenylyltransferase YdiU</fullName>
        <ecNumber evidence="1">2.7.7.108</ecNumber>
    </alternativeName>
    <alternativeName>
        <fullName evidence="1">Protein uridylyltransferase YdiU</fullName>
        <ecNumber evidence="1">2.7.7.-</ecNumber>
    </alternativeName>
</protein>
<keyword id="KW-0067">ATP-binding</keyword>
<keyword id="KW-0460">Magnesium</keyword>
<keyword id="KW-0464">Manganese</keyword>
<keyword id="KW-0479">Metal-binding</keyword>
<keyword id="KW-0547">Nucleotide-binding</keyword>
<keyword id="KW-0548">Nucleotidyltransferase</keyword>
<keyword id="KW-0808">Transferase</keyword>
<feature type="chain" id="PRO_1000212599" description="Protein nucleotidyltransferase YdiU">
    <location>
        <begin position="1"/>
        <end position="494"/>
    </location>
</feature>
<feature type="active site" description="Proton acceptor" evidence="1">
    <location>
        <position position="261"/>
    </location>
</feature>
<feature type="binding site" evidence="1">
    <location>
        <position position="99"/>
    </location>
    <ligand>
        <name>ATP</name>
        <dbReference type="ChEBI" id="CHEBI:30616"/>
    </ligand>
</feature>
<feature type="binding site" evidence="1">
    <location>
        <position position="101"/>
    </location>
    <ligand>
        <name>ATP</name>
        <dbReference type="ChEBI" id="CHEBI:30616"/>
    </ligand>
</feature>
<feature type="binding site" evidence="1">
    <location>
        <position position="102"/>
    </location>
    <ligand>
        <name>ATP</name>
        <dbReference type="ChEBI" id="CHEBI:30616"/>
    </ligand>
</feature>
<feature type="binding site" evidence="1">
    <location>
        <position position="118"/>
    </location>
    <ligand>
        <name>ATP</name>
        <dbReference type="ChEBI" id="CHEBI:30616"/>
    </ligand>
</feature>
<feature type="binding site" evidence="1">
    <location>
        <position position="130"/>
    </location>
    <ligand>
        <name>ATP</name>
        <dbReference type="ChEBI" id="CHEBI:30616"/>
    </ligand>
</feature>
<feature type="binding site" evidence="1">
    <location>
        <position position="131"/>
    </location>
    <ligand>
        <name>ATP</name>
        <dbReference type="ChEBI" id="CHEBI:30616"/>
    </ligand>
</feature>
<feature type="binding site" evidence="1">
    <location>
        <position position="181"/>
    </location>
    <ligand>
        <name>ATP</name>
        <dbReference type="ChEBI" id="CHEBI:30616"/>
    </ligand>
</feature>
<feature type="binding site" evidence="1">
    <location>
        <position position="188"/>
    </location>
    <ligand>
        <name>ATP</name>
        <dbReference type="ChEBI" id="CHEBI:30616"/>
    </ligand>
</feature>
<feature type="binding site" evidence="1">
    <location>
        <position position="262"/>
    </location>
    <ligand>
        <name>Mg(2+)</name>
        <dbReference type="ChEBI" id="CHEBI:18420"/>
    </ligand>
</feature>
<feature type="binding site" evidence="1">
    <location>
        <position position="271"/>
    </location>
    <ligand>
        <name>ATP</name>
        <dbReference type="ChEBI" id="CHEBI:30616"/>
    </ligand>
</feature>
<feature type="binding site" evidence="1">
    <location>
        <position position="271"/>
    </location>
    <ligand>
        <name>Mg(2+)</name>
        <dbReference type="ChEBI" id="CHEBI:18420"/>
    </ligand>
</feature>
<dbReference type="EC" id="2.7.7.-" evidence="1"/>
<dbReference type="EC" id="2.7.7.108" evidence="1"/>
<dbReference type="EMBL" id="CP001635">
    <property type="protein sequence ID" value="ACS19555.1"/>
    <property type="molecule type" value="Genomic_DNA"/>
</dbReference>
<dbReference type="SMR" id="C5CNS8"/>
<dbReference type="STRING" id="543728.Vapar_2935"/>
<dbReference type="KEGG" id="vap:Vapar_2935"/>
<dbReference type="eggNOG" id="COG0397">
    <property type="taxonomic scope" value="Bacteria"/>
</dbReference>
<dbReference type="HOGENOM" id="CLU_010245_4_0_4"/>
<dbReference type="OrthoDB" id="9776281at2"/>
<dbReference type="GO" id="GO:0070733">
    <property type="term" value="F:AMPylase activity"/>
    <property type="evidence" value="ECO:0007669"/>
    <property type="project" value="RHEA"/>
</dbReference>
<dbReference type="GO" id="GO:0005524">
    <property type="term" value="F:ATP binding"/>
    <property type="evidence" value="ECO:0007669"/>
    <property type="project" value="UniProtKB-UniRule"/>
</dbReference>
<dbReference type="GO" id="GO:0000287">
    <property type="term" value="F:magnesium ion binding"/>
    <property type="evidence" value="ECO:0007669"/>
    <property type="project" value="UniProtKB-UniRule"/>
</dbReference>
<dbReference type="HAMAP" id="MF_00692">
    <property type="entry name" value="YdiU_SelO"/>
    <property type="match status" value="1"/>
</dbReference>
<dbReference type="InterPro" id="IPR003846">
    <property type="entry name" value="SelO"/>
</dbReference>
<dbReference type="NCBIfam" id="NF000658">
    <property type="entry name" value="PRK00029.1"/>
    <property type="match status" value="1"/>
</dbReference>
<dbReference type="PANTHER" id="PTHR32057">
    <property type="entry name" value="PROTEIN ADENYLYLTRANSFERASE SELO, MITOCHONDRIAL"/>
    <property type="match status" value="1"/>
</dbReference>
<dbReference type="PANTHER" id="PTHR32057:SF14">
    <property type="entry name" value="PROTEIN ADENYLYLTRANSFERASE SELO, MITOCHONDRIAL"/>
    <property type="match status" value="1"/>
</dbReference>
<dbReference type="Pfam" id="PF02696">
    <property type="entry name" value="SelO"/>
    <property type="match status" value="1"/>
</dbReference>
<evidence type="ECO:0000255" key="1">
    <source>
        <dbReference type="HAMAP-Rule" id="MF_00692"/>
    </source>
</evidence>
<reference key="1">
    <citation type="journal article" date="2011" name="J. Bacteriol.">
        <title>Complete genome sequence of the metabolically versatile plant growth-promoting endophyte, Variovorax paradoxus S110.</title>
        <authorList>
            <person name="Han J.I."/>
            <person name="Choi H.K."/>
            <person name="Lee S.W."/>
            <person name="Orwin P.M."/>
            <person name="Kim J."/>
            <person name="Laroe S.L."/>
            <person name="Kim T.G."/>
            <person name="O'Neil J."/>
            <person name="Leadbetter J.R."/>
            <person name="Lee S.Y."/>
            <person name="Hur C.G."/>
            <person name="Spain J.C."/>
            <person name="Ovchinnikova G."/>
            <person name="Goodwin L."/>
            <person name="Han C."/>
        </authorList>
    </citation>
    <scope>NUCLEOTIDE SEQUENCE [LARGE SCALE GENOMIC DNA]</scope>
    <source>
        <strain>S110</strain>
    </source>
</reference>
<organism>
    <name type="scientific">Variovorax paradoxus (strain S110)</name>
    <dbReference type="NCBI Taxonomy" id="543728"/>
    <lineage>
        <taxon>Bacteria</taxon>
        <taxon>Pseudomonadati</taxon>
        <taxon>Pseudomonadota</taxon>
        <taxon>Betaproteobacteria</taxon>
        <taxon>Burkholderiales</taxon>
        <taxon>Comamonadaceae</taxon>
        <taxon>Variovorax</taxon>
    </lineage>
</organism>
<comment type="function">
    <text evidence="1">Nucleotidyltransferase involved in the post-translational modification of proteins. It can catalyze the addition of adenosine monophosphate (AMP) or uridine monophosphate (UMP) to a protein, resulting in modifications known as AMPylation and UMPylation.</text>
</comment>
<comment type="catalytic activity">
    <reaction evidence="1">
        <text>L-seryl-[protein] + ATP = 3-O-(5'-adenylyl)-L-seryl-[protein] + diphosphate</text>
        <dbReference type="Rhea" id="RHEA:58120"/>
        <dbReference type="Rhea" id="RHEA-COMP:9863"/>
        <dbReference type="Rhea" id="RHEA-COMP:15073"/>
        <dbReference type="ChEBI" id="CHEBI:29999"/>
        <dbReference type="ChEBI" id="CHEBI:30616"/>
        <dbReference type="ChEBI" id="CHEBI:33019"/>
        <dbReference type="ChEBI" id="CHEBI:142516"/>
        <dbReference type="EC" id="2.7.7.108"/>
    </reaction>
</comment>
<comment type="catalytic activity">
    <reaction evidence="1">
        <text>L-threonyl-[protein] + ATP = 3-O-(5'-adenylyl)-L-threonyl-[protein] + diphosphate</text>
        <dbReference type="Rhea" id="RHEA:54292"/>
        <dbReference type="Rhea" id="RHEA-COMP:11060"/>
        <dbReference type="Rhea" id="RHEA-COMP:13847"/>
        <dbReference type="ChEBI" id="CHEBI:30013"/>
        <dbReference type="ChEBI" id="CHEBI:30616"/>
        <dbReference type="ChEBI" id="CHEBI:33019"/>
        <dbReference type="ChEBI" id="CHEBI:138113"/>
        <dbReference type="EC" id="2.7.7.108"/>
    </reaction>
</comment>
<comment type="catalytic activity">
    <reaction evidence="1">
        <text>L-tyrosyl-[protein] + ATP = O-(5'-adenylyl)-L-tyrosyl-[protein] + diphosphate</text>
        <dbReference type="Rhea" id="RHEA:54288"/>
        <dbReference type="Rhea" id="RHEA-COMP:10136"/>
        <dbReference type="Rhea" id="RHEA-COMP:13846"/>
        <dbReference type="ChEBI" id="CHEBI:30616"/>
        <dbReference type="ChEBI" id="CHEBI:33019"/>
        <dbReference type="ChEBI" id="CHEBI:46858"/>
        <dbReference type="ChEBI" id="CHEBI:83624"/>
        <dbReference type="EC" id="2.7.7.108"/>
    </reaction>
</comment>
<comment type="catalytic activity">
    <reaction evidence="1">
        <text>L-histidyl-[protein] + UTP = N(tele)-(5'-uridylyl)-L-histidyl-[protein] + diphosphate</text>
        <dbReference type="Rhea" id="RHEA:83891"/>
        <dbReference type="Rhea" id="RHEA-COMP:9745"/>
        <dbReference type="Rhea" id="RHEA-COMP:20239"/>
        <dbReference type="ChEBI" id="CHEBI:29979"/>
        <dbReference type="ChEBI" id="CHEBI:33019"/>
        <dbReference type="ChEBI" id="CHEBI:46398"/>
        <dbReference type="ChEBI" id="CHEBI:233474"/>
    </reaction>
</comment>
<comment type="catalytic activity">
    <reaction evidence="1">
        <text>L-seryl-[protein] + UTP = O-(5'-uridylyl)-L-seryl-[protein] + diphosphate</text>
        <dbReference type="Rhea" id="RHEA:64604"/>
        <dbReference type="Rhea" id="RHEA-COMP:9863"/>
        <dbReference type="Rhea" id="RHEA-COMP:16635"/>
        <dbReference type="ChEBI" id="CHEBI:29999"/>
        <dbReference type="ChEBI" id="CHEBI:33019"/>
        <dbReference type="ChEBI" id="CHEBI:46398"/>
        <dbReference type="ChEBI" id="CHEBI:156051"/>
    </reaction>
</comment>
<comment type="catalytic activity">
    <reaction evidence="1">
        <text>L-tyrosyl-[protein] + UTP = O-(5'-uridylyl)-L-tyrosyl-[protein] + diphosphate</text>
        <dbReference type="Rhea" id="RHEA:83887"/>
        <dbReference type="Rhea" id="RHEA-COMP:10136"/>
        <dbReference type="Rhea" id="RHEA-COMP:20238"/>
        <dbReference type="ChEBI" id="CHEBI:33019"/>
        <dbReference type="ChEBI" id="CHEBI:46398"/>
        <dbReference type="ChEBI" id="CHEBI:46858"/>
        <dbReference type="ChEBI" id="CHEBI:90602"/>
    </reaction>
</comment>
<comment type="cofactor">
    <cofactor evidence="1">
        <name>Mg(2+)</name>
        <dbReference type="ChEBI" id="CHEBI:18420"/>
    </cofactor>
    <cofactor evidence="1">
        <name>Mn(2+)</name>
        <dbReference type="ChEBI" id="CHEBI:29035"/>
    </cofactor>
</comment>
<comment type="similarity">
    <text evidence="1">Belongs to the SELO family.</text>
</comment>
<sequence length="494" mass="54082">MSLLAEDTAAADLGLRWKPGFRALGPAFLTELRPTPLPDPPYWVGHSEAAARLLGLPADWRQSEGTLAALTGNLPVAGTLPFATVYSGHQFGVWAGQLGDGRAIMLGETEGGLEVQLKGAGRTPYSRGADGRAVLRSSIREFLCSEAMHGLGIPTTRALCVTGSDARVYREMPETAAVVTRVAPSFIRFGHFEHFSASQRDAELRALADYVIDRYYPDCRSTSRFNGNAYAAFLEAVSERTAALLAQWQAVGFCHGVMNTDNMSILGLTIDYGPFQFLDGFDPRHICNHSDTSGRYAFNQQPNVAYWNLFCLAQALLPLIGDQEIAVAALESYKTVFPREFESRMRAKLGLAEPAEGDRALIEGVLKLMAAEKVDYTIFWRRLSQHMAGGNAEPVRDLFLDRAGFDAWLLSFSERHAQLPRAQAADLMLRSNPKYVLRNHLGQQAIEAASQKDFSAVATLLALLETPFEEHPGADAYAGFPPDWASTIEISCSS</sequence>
<accession>C5CNS8</accession>
<name>SELO_VARPS</name>
<gene>
    <name evidence="1" type="primary">ydiU</name>
    <name evidence="1" type="synonym">selO</name>
    <name type="ordered locus">Vapar_2935</name>
</gene>
<proteinExistence type="inferred from homology"/>